<sequence length="96" mass="11199">MDNGIKYAVFTEKSLRLLGKNQYTFNVESGFTKTEIKHWVELFFGVKVVAVNSHRLPGKGRRMGPILGHTMHYRRMIITLQLGILFHFYPLNSRVF</sequence>
<feature type="chain" id="PRO_0000277155" description="Large ribosomal subunit protein uL23cz">
    <location>
        <begin position="1"/>
        <end position="96"/>
    </location>
</feature>
<organism>
    <name type="scientific">Sorghum bicolor</name>
    <name type="common">Sorghum</name>
    <name type="synonym">Sorghum vulgare</name>
    <dbReference type="NCBI Taxonomy" id="4558"/>
    <lineage>
        <taxon>Eukaryota</taxon>
        <taxon>Viridiplantae</taxon>
        <taxon>Streptophyta</taxon>
        <taxon>Embryophyta</taxon>
        <taxon>Tracheophyta</taxon>
        <taxon>Spermatophyta</taxon>
        <taxon>Magnoliopsida</taxon>
        <taxon>Liliopsida</taxon>
        <taxon>Poales</taxon>
        <taxon>Poaceae</taxon>
        <taxon>PACMAD clade</taxon>
        <taxon>Panicoideae</taxon>
        <taxon>Andropogonodae</taxon>
        <taxon>Andropogoneae</taxon>
        <taxon>Sorghinae</taxon>
        <taxon>Sorghum</taxon>
    </lineage>
</organism>
<comment type="function">
    <text evidence="1">Binds to 23S rRNA.</text>
</comment>
<comment type="subunit">
    <text evidence="1">Part of the 50S ribosomal subunit.</text>
</comment>
<comment type="subcellular location">
    <subcellularLocation>
        <location>Plastid</location>
        <location>Chloroplast</location>
    </subcellularLocation>
</comment>
<comment type="similarity">
    <text evidence="2">Belongs to the universal ribosomal protein uL23 family.</text>
</comment>
<name>RK23A_SORBI</name>
<geneLocation type="chloroplast"/>
<gene>
    <name type="primary">rpl23-A</name>
</gene>
<accession>A1E9T3</accession>
<dbReference type="EMBL" id="EF115542">
    <property type="protein sequence ID" value="ABK79505.1"/>
    <property type="molecule type" value="Genomic_DNA"/>
</dbReference>
<dbReference type="SMR" id="A1E9T3"/>
<dbReference type="STRING" id="4558.A1E9T3"/>
<dbReference type="KEGG" id="sbi:4549168"/>
<dbReference type="InParanoid" id="A1E9T3"/>
<dbReference type="OrthoDB" id="563989at2759"/>
<dbReference type="Proteomes" id="UP000000768">
    <property type="component" value="Chloroplast"/>
</dbReference>
<dbReference type="ExpressionAtlas" id="A1E9T3">
    <property type="expression patterns" value="baseline"/>
</dbReference>
<dbReference type="GO" id="GO:0009507">
    <property type="term" value="C:chloroplast"/>
    <property type="evidence" value="ECO:0007669"/>
    <property type="project" value="UniProtKB-SubCell"/>
</dbReference>
<dbReference type="GO" id="GO:0022625">
    <property type="term" value="C:cytosolic large ribosomal subunit"/>
    <property type="evidence" value="ECO:0000318"/>
    <property type="project" value="GO_Central"/>
</dbReference>
<dbReference type="GO" id="GO:0019843">
    <property type="term" value="F:rRNA binding"/>
    <property type="evidence" value="ECO:0007669"/>
    <property type="project" value="UniProtKB-UniRule"/>
</dbReference>
<dbReference type="GO" id="GO:0003735">
    <property type="term" value="F:structural constituent of ribosome"/>
    <property type="evidence" value="ECO:0000318"/>
    <property type="project" value="GO_Central"/>
</dbReference>
<dbReference type="GO" id="GO:0006412">
    <property type="term" value="P:translation"/>
    <property type="evidence" value="ECO:0007669"/>
    <property type="project" value="UniProtKB-UniRule"/>
</dbReference>
<dbReference type="FunFam" id="3.30.70.330:FF:000002">
    <property type="entry name" value="50S ribosomal protein L23, chloroplastic"/>
    <property type="match status" value="1"/>
</dbReference>
<dbReference type="Gene3D" id="3.30.70.330">
    <property type="match status" value="1"/>
</dbReference>
<dbReference type="HAMAP" id="MF_01369_B">
    <property type="entry name" value="Ribosomal_uL23_B"/>
    <property type="match status" value="1"/>
</dbReference>
<dbReference type="InterPro" id="IPR012677">
    <property type="entry name" value="Nucleotide-bd_a/b_plait_sf"/>
</dbReference>
<dbReference type="InterPro" id="IPR013025">
    <property type="entry name" value="Ribosomal_uL23-like"/>
</dbReference>
<dbReference type="InterPro" id="IPR012678">
    <property type="entry name" value="Ribosomal_uL23/eL15/eS24_sf"/>
</dbReference>
<dbReference type="PANTHER" id="PTHR11620">
    <property type="entry name" value="60S RIBOSOMAL PROTEIN L23A"/>
    <property type="match status" value="1"/>
</dbReference>
<dbReference type="Pfam" id="PF00276">
    <property type="entry name" value="Ribosomal_L23"/>
    <property type="match status" value="1"/>
</dbReference>
<dbReference type="SUPFAM" id="SSF54189">
    <property type="entry name" value="Ribosomal proteins S24e, L23 and L15e"/>
    <property type="match status" value="1"/>
</dbReference>
<keyword id="KW-0150">Chloroplast</keyword>
<keyword id="KW-0934">Plastid</keyword>
<keyword id="KW-1185">Reference proteome</keyword>
<keyword id="KW-0687">Ribonucleoprotein</keyword>
<keyword id="KW-0689">Ribosomal protein</keyword>
<keyword id="KW-0694">RNA-binding</keyword>
<keyword id="KW-0699">rRNA-binding</keyword>
<reference key="1">
    <citation type="journal article" date="2007" name="Theor. Appl. Genet.">
        <title>Complete chloroplast genome sequences of Hordeum vulgare, Sorghum bicolor and Agrostis stolonifera, and comparative analyses with other grass genomes.</title>
        <authorList>
            <person name="Saski C."/>
            <person name="Lee S.-B."/>
            <person name="Fjellheim S."/>
            <person name="Guda C."/>
            <person name="Jansen R.K."/>
            <person name="Luo H."/>
            <person name="Tomkins J."/>
            <person name="Rognli O.A."/>
            <person name="Daniell H."/>
            <person name="Clarke J.L."/>
        </authorList>
    </citation>
    <scope>NUCLEOTIDE SEQUENCE [LARGE SCALE GENOMIC DNA]</scope>
    <source>
        <strain>cv. BTx623</strain>
    </source>
</reference>
<proteinExistence type="inferred from homology"/>
<evidence type="ECO:0000250" key="1"/>
<evidence type="ECO:0000305" key="2"/>
<protein>
    <recommendedName>
        <fullName evidence="2">Large ribosomal subunit protein uL23cz</fullName>
    </recommendedName>
    <alternativeName>
        <fullName>50S ribosomal protein L23-A, chloroplastic</fullName>
    </alternativeName>
</protein>